<dbReference type="EC" id="2.4.2.29" evidence="1"/>
<dbReference type="EMBL" id="AP009240">
    <property type="protein sequence ID" value="BAG75951.1"/>
    <property type="molecule type" value="Genomic_DNA"/>
</dbReference>
<dbReference type="RefSeq" id="WP_000667319.1">
    <property type="nucleotide sequence ID" value="NC_011415.1"/>
</dbReference>
<dbReference type="SMR" id="B6HZK6"/>
<dbReference type="GeneID" id="93777054"/>
<dbReference type="KEGG" id="ecy:ECSE_0427"/>
<dbReference type="HOGENOM" id="CLU_022060_0_1_6"/>
<dbReference type="UniPathway" id="UPA00392"/>
<dbReference type="Proteomes" id="UP000008199">
    <property type="component" value="Chromosome"/>
</dbReference>
<dbReference type="GO" id="GO:0005829">
    <property type="term" value="C:cytosol"/>
    <property type="evidence" value="ECO:0007669"/>
    <property type="project" value="TreeGrafter"/>
</dbReference>
<dbReference type="GO" id="GO:0046872">
    <property type="term" value="F:metal ion binding"/>
    <property type="evidence" value="ECO:0007669"/>
    <property type="project" value="UniProtKB-KW"/>
</dbReference>
<dbReference type="GO" id="GO:0008479">
    <property type="term" value="F:tRNA-guanosine(34) queuine transglycosylase activity"/>
    <property type="evidence" value="ECO:0007669"/>
    <property type="project" value="UniProtKB-UniRule"/>
</dbReference>
<dbReference type="GO" id="GO:0008616">
    <property type="term" value="P:queuosine biosynthetic process"/>
    <property type="evidence" value="ECO:0007669"/>
    <property type="project" value="UniProtKB-UniRule"/>
</dbReference>
<dbReference type="GO" id="GO:0002099">
    <property type="term" value="P:tRNA wobble guanine modification"/>
    <property type="evidence" value="ECO:0007669"/>
    <property type="project" value="TreeGrafter"/>
</dbReference>
<dbReference type="GO" id="GO:0101030">
    <property type="term" value="P:tRNA-guanine transglycosylation"/>
    <property type="evidence" value="ECO:0007669"/>
    <property type="project" value="InterPro"/>
</dbReference>
<dbReference type="FunFam" id="3.20.20.105:FF:000001">
    <property type="entry name" value="Queuine tRNA-ribosyltransferase"/>
    <property type="match status" value="1"/>
</dbReference>
<dbReference type="Gene3D" id="3.20.20.105">
    <property type="entry name" value="Queuine tRNA-ribosyltransferase-like"/>
    <property type="match status" value="1"/>
</dbReference>
<dbReference type="HAMAP" id="MF_00168">
    <property type="entry name" value="Q_tRNA_Tgt"/>
    <property type="match status" value="1"/>
</dbReference>
<dbReference type="InterPro" id="IPR050076">
    <property type="entry name" value="ArchSynthase1/Queuine_TRR"/>
</dbReference>
<dbReference type="InterPro" id="IPR004803">
    <property type="entry name" value="TGT"/>
</dbReference>
<dbReference type="InterPro" id="IPR036511">
    <property type="entry name" value="TGT-like_sf"/>
</dbReference>
<dbReference type="InterPro" id="IPR002616">
    <property type="entry name" value="tRNA_ribo_trans-like"/>
</dbReference>
<dbReference type="NCBIfam" id="TIGR00430">
    <property type="entry name" value="Q_tRNA_tgt"/>
    <property type="match status" value="1"/>
</dbReference>
<dbReference type="NCBIfam" id="TIGR00449">
    <property type="entry name" value="tgt_general"/>
    <property type="match status" value="1"/>
</dbReference>
<dbReference type="PANTHER" id="PTHR46499">
    <property type="entry name" value="QUEUINE TRNA-RIBOSYLTRANSFERASE"/>
    <property type="match status" value="1"/>
</dbReference>
<dbReference type="PANTHER" id="PTHR46499:SF1">
    <property type="entry name" value="QUEUINE TRNA-RIBOSYLTRANSFERASE"/>
    <property type="match status" value="1"/>
</dbReference>
<dbReference type="Pfam" id="PF01702">
    <property type="entry name" value="TGT"/>
    <property type="match status" value="1"/>
</dbReference>
<dbReference type="SUPFAM" id="SSF51713">
    <property type="entry name" value="tRNA-guanine transglycosylase"/>
    <property type="match status" value="1"/>
</dbReference>
<comment type="function">
    <text evidence="1">Catalyzes the base-exchange of a guanine (G) residue with the queuine precursor 7-aminomethyl-7-deazaguanine (PreQ1) at position 34 (anticodon wobble position) in tRNAs with GU(N) anticodons (tRNA-Asp, -Asn, -His and -Tyr). Catalysis occurs through a double-displacement mechanism. The nucleophile active site attacks the C1' of nucleotide 34 to detach the guanine base from the RNA, forming a covalent enzyme-RNA intermediate. The proton acceptor active site deprotonates the incoming PreQ1, allowing a nucleophilic attack on the C1' of the ribose to form the product. After dissociation, two additional enzymatic reactions on the tRNA convert PreQ1 to queuine (Q), resulting in the hypermodified nucleoside queuosine (7-(((4,5-cis-dihydroxy-2-cyclopenten-1-yl)amino)methyl)-7-deazaguanosine).</text>
</comment>
<comment type="catalytic activity">
    <reaction evidence="1">
        <text>7-aminomethyl-7-carbaguanine + guanosine(34) in tRNA = 7-aminomethyl-7-carbaguanosine(34) in tRNA + guanine</text>
        <dbReference type="Rhea" id="RHEA:24104"/>
        <dbReference type="Rhea" id="RHEA-COMP:10341"/>
        <dbReference type="Rhea" id="RHEA-COMP:10342"/>
        <dbReference type="ChEBI" id="CHEBI:16235"/>
        <dbReference type="ChEBI" id="CHEBI:58703"/>
        <dbReference type="ChEBI" id="CHEBI:74269"/>
        <dbReference type="ChEBI" id="CHEBI:82833"/>
        <dbReference type="EC" id="2.4.2.29"/>
    </reaction>
</comment>
<comment type="cofactor">
    <cofactor evidence="1">
        <name>Zn(2+)</name>
        <dbReference type="ChEBI" id="CHEBI:29105"/>
    </cofactor>
    <text evidence="1">Binds 1 zinc ion per subunit.</text>
</comment>
<comment type="pathway">
    <text evidence="1">tRNA modification; tRNA-queuosine biosynthesis.</text>
</comment>
<comment type="subunit">
    <text evidence="1">Homodimer. Within each dimer, one monomer is responsible for RNA recognition and catalysis, while the other monomer binds to the replacement base PreQ1.</text>
</comment>
<comment type="similarity">
    <text evidence="1">Belongs to the queuine tRNA-ribosyltransferase family.</text>
</comment>
<accession>B6HZK6</accession>
<organism>
    <name type="scientific">Escherichia coli (strain SE11)</name>
    <dbReference type="NCBI Taxonomy" id="409438"/>
    <lineage>
        <taxon>Bacteria</taxon>
        <taxon>Pseudomonadati</taxon>
        <taxon>Pseudomonadota</taxon>
        <taxon>Gammaproteobacteria</taxon>
        <taxon>Enterobacterales</taxon>
        <taxon>Enterobacteriaceae</taxon>
        <taxon>Escherichia</taxon>
    </lineage>
</organism>
<proteinExistence type="inferred from homology"/>
<name>TGT_ECOSE</name>
<keyword id="KW-0328">Glycosyltransferase</keyword>
<keyword id="KW-0479">Metal-binding</keyword>
<keyword id="KW-0671">Queuosine biosynthesis</keyword>
<keyword id="KW-0808">Transferase</keyword>
<keyword id="KW-0819">tRNA processing</keyword>
<keyword id="KW-0862">Zinc</keyword>
<gene>
    <name evidence="1" type="primary">tgt</name>
    <name type="ordered locus">ECSE_0427</name>
</gene>
<protein>
    <recommendedName>
        <fullName evidence="1">Queuine tRNA-ribosyltransferase</fullName>
        <ecNumber evidence="1">2.4.2.29</ecNumber>
    </recommendedName>
    <alternativeName>
        <fullName evidence="1">Guanine insertion enzyme</fullName>
    </alternativeName>
    <alternativeName>
        <fullName evidence="1">tRNA-guanine transglycosylase</fullName>
    </alternativeName>
</protein>
<sequence>MKFELDTTDGRARRGRLVFDRGVVETPCFMPVGTYGTVKGMTPEEVEATGAQIILGNTFHLWLRPGQEIMKLHGDLHDFMQWKGPILTDSGGFQVFSLGDIRKITEQGVHFRNPINGDPIFLDPEKSMEIQYDLGSDIVMIFDECTPYPADWDYAKRSMEMSLRWAKRSRERFDSLGNKNALFGIIQGSVYEDLRDISVKGLVDIGFDGYAVGGLAVGEPKADMHRILEHVCPQIPADKPRYLMGVGKPEDLVEGVRRGIDMFDCVMPTRNARNGHLFVTDGVVKIRNAKYKSDTGPLDPECDCYTCRNYSRAYLHHLDRCNEILGARLNTIHNLRYYQRLMAGLRKAIEEGKLESFVTDFYQRQGREVPPLNVD</sequence>
<evidence type="ECO:0000255" key="1">
    <source>
        <dbReference type="HAMAP-Rule" id="MF_00168"/>
    </source>
</evidence>
<feature type="chain" id="PRO_1000097543" description="Queuine tRNA-ribosyltransferase">
    <location>
        <begin position="1"/>
        <end position="375"/>
    </location>
</feature>
<feature type="region of interest" description="RNA binding" evidence="1">
    <location>
        <begin position="245"/>
        <end position="251"/>
    </location>
</feature>
<feature type="region of interest" description="RNA binding; important for wobble base 34 recognition" evidence="1">
    <location>
        <begin position="269"/>
        <end position="273"/>
    </location>
</feature>
<feature type="active site" description="Proton acceptor" evidence="1">
    <location>
        <position position="89"/>
    </location>
</feature>
<feature type="active site" description="Nucleophile" evidence="1">
    <location>
        <position position="264"/>
    </location>
</feature>
<feature type="binding site" evidence="1">
    <location>
        <begin position="89"/>
        <end position="93"/>
    </location>
    <ligand>
        <name>substrate</name>
    </ligand>
</feature>
<feature type="binding site" evidence="1">
    <location>
        <position position="143"/>
    </location>
    <ligand>
        <name>substrate</name>
    </ligand>
</feature>
<feature type="binding site" evidence="1">
    <location>
        <position position="187"/>
    </location>
    <ligand>
        <name>substrate</name>
    </ligand>
</feature>
<feature type="binding site" evidence="1">
    <location>
        <position position="214"/>
    </location>
    <ligand>
        <name>substrate</name>
    </ligand>
</feature>
<feature type="binding site" evidence="1">
    <location>
        <position position="302"/>
    </location>
    <ligand>
        <name>Zn(2+)</name>
        <dbReference type="ChEBI" id="CHEBI:29105"/>
    </ligand>
</feature>
<feature type="binding site" evidence="1">
    <location>
        <position position="304"/>
    </location>
    <ligand>
        <name>Zn(2+)</name>
        <dbReference type="ChEBI" id="CHEBI:29105"/>
    </ligand>
</feature>
<feature type="binding site" evidence="1">
    <location>
        <position position="307"/>
    </location>
    <ligand>
        <name>Zn(2+)</name>
        <dbReference type="ChEBI" id="CHEBI:29105"/>
    </ligand>
</feature>
<feature type="binding site" evidence="1">
    <location>
        <position position="333"/>
    </location>
    <ligand>
        <name>Zn(2+)</name>
        <dbReference type="ChEBI" id="CHEBI:29105"/>
    </ligand>
</feature>
<reference key="1">
    <citation type="journal article" date="2008" name="DNA Res.">
        <title>Complete genome sequence and comparative analysis of the wild-type commensal Escherichia coli strain SE11 isolated from a healthy adult.</title>
        <authorList>
            <person name="Oshima K."/>
            <person name="Toh H."/>
            <person name="Ogura Y."/>
            <person name="Sasamoto H."/>
            <person name="Morita H."/>
            <person name="Park S.-H."/>
            <person name="Ooka T."/>
            <person name="Iyoda S."/>
            <person name="Taylor T.D."/>
            <person name="Hayashi T."/>
            <person name="Itoh K."/>
            <person name="Hattori M."/>
        </authorList>
    </citation>
    <scope>NUCLEOTIDE SEQUENCE [LARGE SCALE GENOMIC DNA]</scope>
    <source>
        <strain>SE11</strain>
    </source>
</reference>